<proteinExistence type="inferred from homology"/>
<evidence type="ECO:0000255" key="1">
    <source>
        <dbReference type="HAMAP-Rule" id="MF_00402"/>
    </source>
</evidence>
<evidence type="ECO:0000305" key="2"/>
<name>RL19_STRPZ</name>
<protein>
    <recommendedName>
        <fullName evidence="1">Large ribosomal subunit protein bL19</fullName>
    </recommendedName>
    <alternativeName>
        <fullName evidence="2">50S ribosomal protein L19</fullName>
    </alternativeName>
</protein>
<reference key="1">
    <citation type="journal article" date="2008" name="J. Bacteriol.">
        <title>Genome sequence of a nephritogenic and highly transformable M49 strain of Streptococcus pyogenes.</title>
        <authorList>
            <person name="McShan W.M."/>
            <person name="Ferretti J.J."/>
            <person name="Karasawa T."/>
            <person name="Suvorov A.N."/>
            <person name="Lin S."/>
            <person name="Qin B."/>
            <person name="Jia H."/>
            <person name="Kenton S."/>
            <person name="Najar F."/>
            <person name="Wu H."/>
            <person name="Scott J."/>
            <person name="Roe B.A."/>
            <person name="Savic D.J."/>
        </authorList>
    </citation>
    <scope>NUCLEOTIDE SEQUENCE [LARGE SCALE GENOMIC DNA]</scope>
    <source>
        <strain>NZ131</strain>
    </source>
</reference>
<feature type="chain" id="PRO_1000193901" description="Large ribosomal subunit protein bL19">
    <location>
        <begin position="1"/>
        <end position="115"/>
    </location>
</feature>
<sequence length="115" mass="13131">MNPLIQSLTEGQLRSDVPNFRPGDTVRVHAKVVEGTRERIQIFEGVVISRKGQGISEMYTVRKISGGIGVERTFPIHTPRVDKIEVIRHGKVRRAKLYYLRALQGKAARIKEIRR</sequence>
<dbReference type="EMBL" id="CP000829">
    <property type="protein sequence ID" value="ACI60884.1"/>
    <property type="molecule type" value="Genomic_DNA"/>
</dbReference>
<dbReference type="SMR" id="B5XKM2"/>
<dbReference type="KEGG" id="soz:Spy49_0558"/>
<dbReference type="HOGENOM" id="CLU_103507_2_1_9"/>
<dbReference type="Proteomes" id="UP000001039">
    <property type="component" value="Chromosome"/>
</dbReference>
<dbReference type="GO" id="GO:0022625">
    <property type="term" value="C:cytosolic large ribosomal subunit"/>
    <property type="evidence" value="ECO:0007669"/>
    <property type="project" value="TreeGrafter"/>
</dbReference>
<dbReference type="GO" id="GO:0003735">
    <property type="term" value="F:structural constituent of ribosome"/>
    <property type="evidence" value="ECO:0007669"/>
    <property type="project" value="InterPro"/>
</dbReference>
<dbReference type="GO" id="GO:0006412">
    <property type="term" value="P:translation"/>
    <property type="evidence" value="ECO:0007669"/>
    <property type="project" value="UniProtKB-UniRule"/>
</dbReference>
<dbReference type="FunFam" id="2.30.30.790:FF:000001">
    <property type="entry name" value="50S ribosomal protein L19"/>
    <property type="match status" value="1"/>
</dbReference>
<dbReference type="Gene3D" id="2.30.30.790">
    <property type="match status" value="1"/>
</dbReference>
<dbReference type="HAMAP" id="MF_00402">
    <property type="entry name" value="Ribosomal_bL19"/>
    <property type="match status" value="1"/>
</dbReference>
<dbReference type="InterPro" id="IPR001857">
    <property type="entry name" value="Ribosomal_bL19"/>
</dbReference>
<dbReference type="InterPro" id="IPR018257">
    <property type="entry name" value="Ribosomal_bL19_CS"/>
</dbReference>
<dbReference type="InterPro" id="IPR038657">
    <property type="entry name" value="Ribosomal_bL19_sf"/>
</dbReference>
<dbReference type="InterPro" id="IPR008991">
    <property type="entry name" value="Translation_prot_SH3-like_sf"/>
</dbReference>
<dbReference type="NCBIfam" id="TIGR01024">
    <property type="entry name" value="rplS_bact"/>
    <property type="match status" value="1"/>
</dbReference>
<dbReference type="PANTHER" id="PTHR15680:SF9">
    <property type="entry name" value="LARGE RIBOSOMAL SUBUNIT PROTEIN BL19M"/>
    <property type="match status" value="1"/>
</dbReference>
<dbReference type="PANTHER" id="PTHR15680">
    <property type="entry name" value="RIBOSOMAL PROTEIN L19"/>
    <property type="match status" value="1"/>
</dbReference>
<dbReference type="Pfam" id="PF01245">
    <property type="entry name" value="Ribosomal_L19"/>
    <property type="match status" value="1"/>
</dbReference>
<dbReference type="PIRSF" id="PIRSF002191">
    <property type="entry name" value="Ribosomal_L19"/>
    <property type="match status" value="1"/>
</dbReference>
<dbReference type="PRINTS" id="PR00061">
    <property type="entry name" value="RIBOSOMALL19"/>
</dbReference>
<dbReference type="SUPFAM" id="SSF50104">
    <property type="entry name" value="Translation proteins SH3-like domain"/>
    <property type="match status" value="1"/>
</dbReference>
<dbReference type="PROSITE" id="PS01015">
    <property type="entry name" value="RIBOSOMAL_L19"/>
    <property type="match status" value="1"/>
</dbReference>
<comment type="function">
    <text evidence="1">This protein is located at the 30S-50S ribosomal subunit interface and may play a role in the structure and function of the aminoacyl-tRNA binding site.</text>
</comment>
<comment type="similarity">
    <text evidence="1">Belongs to the bacterial ribosomal protein bL19 family.</text>
</comment>
<keyword id="KW-0687">Ribonucleoprotein</keyword>
<keyword id="KW-0689">Ribosomal protein</keyword>
<gene>
    <name evidence="1" type="primary">rplS</name>
    <name type="ordered locus">Spy49_0558</name>
</gene>
<accession>B5XKM2</accession>
<organism>
    <name type="scientific">Streptococcus pyogenes serotype M49 (strain NZ131)</name>
    <dbReference type="NCBI Taxonomy" id="471876"/>
    <lineage>
        <taxon>Bacteria</taxon>
        <taxon>Bacillati</taxon>
        <taxon>Bacillota</taxon>
        <taxon>Bacilli</taxon>
        <taxon>Lactobacillales</taxon>
        <taxon>Streptococcaceae</taxon>
        <taxon>Streptococcus</taxon>
    </lineage>
</organism>